<accession>A6QBP7</accession>
<keyword id="KW-0143">Chaperone</keyword>
<keyword id="KW-0963">Cytoplasm</keyword>
<reference key="1">
    <citation type="journal article" date="2007" name="Proc. Natl. Acad. Sci. U.S.A.">
        <title>Deep-sea vent epsilon-proteobacterial genomes provide insights into emergence of pathogens.</title>
        <authorList>
            <person name="Nakagawa S."/>
            <person name="Takaki Y."/>
            <person name="Shimamura S."/>
            <person name="Reysenbach A.-L."/>
            <person name="Takai K."/>
            <person name="Horikoshi K."/>
        </authorList>
    </citation>
    <scope>NUCLEOTIDE SEQUENCE [LARGE SCALE GENOMIC DNA]</scope>
    <source>
        <strain>NBC37-1</strain>
    </source>
</reference>
<sequence length="86" mass="9369">MNFKPLGDRLLIQRVEEANTTASGIIIPDNAKEKPSKGKVIAVGSEVEDINVDDTVVFGKYSGNEIILDGEEFLIMESSDIFGILI</sequence>
<dbReference type="EMBL" id="AP009179">
    <property type="protein sequence ID" value="BAF72906.1"/>
    <property type="molecule type" value="Genomic_DNA"/>
</dbReference>
<dbReference type="RefSeq" id="WP_012083726.1">
    <property type="nucleotide sequence ID" value="NC_009663.1"/>
</dbReference>
<dbReference type="SMR" id="A6QBP7"/>
<dbReference type="STRING" id="387093.SUN_1963"/>
<dbReference type="KEGG" id="sun:SUN_1963"/>
<dbReference type="eggNOG" id="COG0234">
    <property type="taxonomic scope" value="Bacteria"/>
</dbReference>
<dbReference type="HOGENOM" id="CLU_132825_2_0_7"/>
<dbReference type="OrthoDB" id="9806791at2"/>
<dbReference type="Proteomes" id="UP000006378">
    <property type="component" value="Chromosome"/>
</dbReference>
<dbReference type="GO" id="GO:0005737">
    <property type="term" value="C:cytoplasm"/>
    <property type="evidence" value="ECO:0007669"/>
    <property type="project" value="UniProtKB-SubCell"/>
</dbReference>
<dbReference type="GO" id="GO:0005524">
    <property type="term" value="F:ATP binding"/>
    <property type="evidence" value="ECO:0007669"/>
    <property type="project" value="InterPro"/>
</dbReference>
<dbReference type="GO" id="GO:0046872">
    <property type="term" value="F:metal ion binding"/>
    <property type="evidence" value="ECO:0007669"/>
    <property type="project" value="TreeGrafter"/>
</dbReference>
<dbReference type="GO" id="GO:0044183">
    <property type="term" value="F:protein folding chaperone"/>
    <property type="evidence" value="ECO:0007669"/>
    <property type="project" value="InterPro"/>
</dbReference>
<dbReference type="GO" id="GO:0051087">
    <property type="term" value="F:protein-folding chaperone binding"/>
    <property type="evidence" value="ECO:0007669"/>
    <property type="project" value="TreeGrafter"/>
</dbReference>
<dbReference type="GO" id="GO:0051082">
    <property type="term" value="F:unfolded protein binding"/>
    <property type="evidence" value="ECO:0007669"/>
    <property type="project" value="TreeGrafter"/>
</dbReference>
<dbReference type="GO" id="GO:0051085">
    <property type="term" value="P:chaperone cofactor-dependent protein refolding"/>
    <property type="evidence" value="ECO:0007669"/>
    <property type="project" value="TreeGrafter"/>
</dbReference>
<dbReference type="CDD" id="cd00320">
    <property type="entry name" value="cpn10"/>
    <property type="match status" value="1"/>
</dbReference>
<dbReference type="FunFam" id="2.30.33.40:FF:000001">
    <property type="entry name" value="10 kDa chaperonin"/>
    <property type="match status" value="1"/>
</dbReference>
<dbReference type="Gene3D" id="2.30.33.40">
    <property type="entry name" value="GroES chaperonin"/>
    <property type="match status" value="1"/>
</dbReference>
<dbReference type="HAMAP" id="MF_00580">
    <property type="entry name" value="CH10"/>
    <property type="match status" value="1"/>
</dbReference>
<dbReference type="InterPro" id="IPR020818">
    <property type="entry name" value="Chaperonin_GroES"/>
</dbReference>
<dbReference type="InterPro" id="IPR037124">
    <property type="entry name" value="Chaperonin_GroES_sf"/>
</dbReference>
<dbReference type="InterPro" id="IPR018369">
    <property type="entry name" value="Chaprnonin_Cpn10_CS"/>
</dbReference>
<dbReference type="InterPro" id="IPR011032">
    <property type="entry name" value="GroES-like_sf"/>
</dbReference>
<dbReference type="NCBIfam" id="NF001531">
    <property type="entry name" value="PRK00364.2-2"/>
    <property type="match status" value="1"/>
</dbReference>
<dbReference type="NCBIfam" id="NF001537">
    <property type="entry name" value="PRK00364.3-3"/>
    <property type="match status" value="1"/>
</dbReference>
<dbReference type="PANTHER" id="PTHR10772">
    <property type="entry name" value="10 KDA HEAT SHOCK PROTEIN"/>
    <property type="match status" value="1"/>
</dbReference>
<dbReference type="PANTHER" id="PTHR10772:SF58">
    <property type="entry name" value="CO-CHAPERONIN GROES"/>
    <property type="match status" value="1"/>
</dbReference>
<dbReference type="Pfam" id="PF00166">
    <property type="entry name" value="Cpn10"/>
    <property type="match status" value="1"/>
</dbReference>
<dbReference type="PRINTS" id="PR00297">
    <property type="entry name" value="CHAPERONIN10"/>
</dbReference>
<dbReference type="SMART" id="SM00883">
    <property type="entry name" value="Cpn10"/>
    <property type="match status" value="1"/>
</dbReference>
<dbReference type="SUPFAM" id="SSF50129">
    <property type="entry name" value="GroES-like"/>
    <property type="match status" value="1"/>
</dbReference>
<dbReference type="PROSITE" id="PS00681">
    <property type="entry name" value="CHAPERONINS_CPN10"/>
    <property type="match status" value="1"/>
</dbReference>
<feature type="chain" id="PRO_1000025383" description="Co-chaperonin GroES">
    <location>
        <begin position="1"/>
        <end position="86"/>
    </location>
</feature>
<comment type="function">
    <text evidence="1">Together with the chaperonin GroEL, plays an essential role in assisting protein folding. The GroEL-GroES system forms a nano-cage that allows encapsulation of the non-native substrate proteins and provides a physical environment optimized to promote and accelerate protein folding. GroES binds to the apical surface of the GroEL ring, thereby capping the opening of the GroEL channel.</text>
</comment>
<comment type="subunit">
    <text evidence="1">Heptamer of 7 subunits arranged in a ring. Interacts with the chaperonin GroEL.</text>
</comment>
<comment type="subcellular location">
    <subcellularLocation>
        <location evidence="1">Cytoplasm</location>
    </subcellularLocation>
</comment>
<comment type="similarity">
    <text evidence="1">Belongs to the GroES chaperonin family.</text>
</comment>
<protein>
    <recommendedName>
        <fullName evidence="1">Co-chaperonin GroES</fullName>
    </recommendedName>
    <alternativeName>
        <fullName evidence="1">10 kDa chaperonin</fullName>
    </alternativeName>
    <alternativeName>
        <fullName evidence="1">Chaperonin-10</fullName>
        <shortName evidence="1">Cpn10</shortName>
    </alternativeName>
</protein>
<proteinExistence type="inferred from homology"/>
<name>CH10_SULNB</name>
<gene>
    <name evidence="1" type="primary">groES</name>
    <name evidence="1" type="synonym">groS</name>
    <name type="ordered locus">SUN_1963</name>
</gene>
<evidence type="ECO:0000255" key="1">
    <source>
        <dbReference type="HAMAP-Rule" id="MF_00580"/>
    </source>
</evidence>
<organism>
    <name type="scientific">Sulfurovum sp. (strain NBC37-1)</name>
    <dbReference type="NCBI Taxonomy" id="387093"/>
    <lineage>
        <taxon>Bacteria</taxon>
        <taxon>Pseudomonadati</taxon>
        <taxon>Campylobacterota</taxon>
        <taxon>Epsilonproteobacteria</taxon>
        <taxon>Campylobacterales</taxon>
        <taxon>Sulfurovaceae</taxon>
        <taxon>Sulfurovum</taxon>
    </lineage>
</organism>